<accession>B4TSR5</accession>
<sequence length="404" mass="43568">MSPSDVPINWKRNLTVTWLGCFLTGAAFSLVMPFLPLYVEQLGVTGHSALNMWSGLVFSITFLFSAIASPFWGGLADRKGRKIMLLRSALGMAIVMLLMGMAQNIWQFLILRALLGLLGGFIPNANALIATQVPRHKSGWALGTLSTGGVSGALLGPLAGGLLADHYGLRPVFFITASVLFICFLLTFFFIRENFLPVSKKEMLHVREVVASLKNPRLVLSLFVTTLIIQVATGSIAPILTLYVRELAGNVSNIAFISGMIASVPGVAALLSAPRLGKLGDKIGPEKILIVALIISVLLLIPMSFVQTPWQLALLRFLLGAADGALLPAVQTLLVYNSTNQIAGRIFSYNQSFRDIGNVTGPLMGAAISASYGFRAVFCVTAGVVLFNAIYSWNSLRRRRLAIE</sequence>
<comment type="subcellular location">
    <subcellularLocation>
        <location evidence="1">Cell inner membrane</location>
        <topology evidence="1">Multi-pass membrane protein</topology>
    </subcellularLocation>
</comment>
<comment type="similarity">
    <text evidence="1">Belongs to the major facilitator superfamily. DHA1 family. MdtG (TC 2.A.1.2.20) subfamily.</text>
</comment>
<proteinExistence type="inferred from homology"/>
<protein>
    <recommendedName>
        <fullName evidence="1">Multidrug resistance protein MdtG</fullName>
    </recommendedName>
</protein>
<dbReference type="EMBL" id="CP001127">
    <property type="protein sequence ID" value="ACF90602.1"/>
    <property type="molecule type" value="Genomic_DNA"/>
</dbReference>
<dbReference type="RefSeq" id="WP_000075050.1">
    <property type="nucleotide sequence ID" value="NC_011094.1"/>
</dbReference>
<dbReference type="SMR" id="B4TSR5"/>
<dbReference type="KEGG" id="sew:SeSA_A1221"/>
<dbReference type="HOGENOM" id="CLU_001265_57_3_6"/>
<dbReference type="Proteomes" id="UP000001865">
    <property type="component" value="Chromosome"/>
</dbReference>
<dbReference type="GO" id="GO:0005886">
    <property type="term" value="C:plasma membrane"/>
    <property type="evidence" value="ECO:0007669"/>
    <property type="project" value="UniProtKB-SubCell"/>
</dbReference>
<dbReference type="GO" id="GO:0022857">
    <property type="term" value="F:transmembrane transporter activity"/>
    <property type="evidence" value="ECO:0007669"/>
    <property type="project" value="UniProtKB-UniRule"/>
</dbReference>
<dbReference type="CDD" id="cd17391">
    <property type="entry name" value="MFS_MdtG_MDR_like"/>
    <property type="match status" value="1"/>
</dbReference>
<dbReference type="FunFam" id="1.20.1250.20:FF:000020">
    <property type="entry name" value="Multidrug resistance protein MdtG"/>
    <property type="match status" value="1"/>
</dbReference>
<dbReference type="FunFam" id="1.20.1250.20:FF:000022">
    <property type="entry name" value="Multidrug resistance protein MdtG"/>
    <property type="match status" value="1"/>
</dbReference>
<dbReference type="Gene3D" id="1.20.1250.20">
    <property type="entry name" value="MFS general substrate transporter like domains"/>
    <property type="match status" value="2"/>
</dbReference>
<dbReference type="HAMAP" id="MF_01528">
    <property type="entry name" value="MFS_MdtG"/>
    <property type="match status" value="1"/>
</dbReference>
<dbReference type="InterPro" id="IPR011701">
    <property type="entry name" value="MFS"/>
</dbReference>
<dbReference type="InterPro" id="IPR020846">
    <property type="entry name" value="MFS_dom"/>
</dbReference>
<dbReference type="InterPro" id="IPR050497">
    <property type="entry name" value="MFS_MdtG_subfamily"/>
</dbReference>
<dbReference type="InterPro" id="IPR005828">
    <property type="entry name" value="MFS_sugar_transport-like"/>
</dbReference>
<dbReference type="InterPro" id="IPR036259">
    <property type="entry name" value="MFS_trans_sf"/>
</dbReference>
<dbReference type="InterPro" id="IPR023692">
    <property type="entry name" value="Mutidrug-R_MdtG"/>
</dbReference>
<dbReference type="InterPro" id="IPR001958">
    <property type="entry name" value="Tet-R_TetA/multi-R_MdtG-like"/>
</dbReference>
<dbReference type="NCBIfam" id="NF007372">
    <property type="entry name" value="PRK09874.1"/>
    <property type="match status" value="1"/>
</dbReference>
<dbReference type="PANTHER" id="PTHR43414">
    <property type="entry name" value="MULTIDRUG RESISTANCE PROTEIN MDTG"/>
    <property type="match status" value="1"/>
</dbReference>
<dbReference type="PANTHER" id="PTHR43414:SF6">
    <property type="entry name" value="MULTIDRUG RESISTANCE PROTEIN MDTG"/>
    <property type="match status" value="1"/>
</dbReference>
<dbReference type="Pfam" id="PF07690">
    <property type="entry name" value="MFS_1"/>
    <property type="match status" value="1"/>
</dbReference>
<dbReference type="Pfam" id="PF00083">
    <property type="entry name" value="Sugar_tr"/>
    <property type="match status" value="1"/>
</dbReference>
<dbReference type="PRINTS" id="PR01035">
    <property type="entry name" value="TCRTETA"/>
</dbReference>
<dbReference type="SUPFAM" id="SSF103473">
    <property type="entry name" value="MFS general substrate transporter"/>
    <property type="match status" value="1"/>
</dbReference>
<dbReference type="PROSITE" id="PS50850">
    <property type="entry name" value="MFS"/>
    <property type="match status" value="1"/>
</dbReference>
<evidence type="ECO:0000255" key="1">
    <source>
        <dbReference type="HAMAP-Rule" id="MF_01528"/>
    </source>
</evidence>
<name>MDTG_SALSV</name>
<reference key="1">
    <citation type="journal article" date="2011" name="J. Bacteriol.">
        <title>Comparative genomics of 28 Salmonella enterica isolates: evidence for CRISPR-mediated adaptive sublineage evolution.</title>
        <authorList>
            <person name="Fricke W.F."/>
            <person name="Mammel M.K."/>
            <person name="McDermott P.F."/>
            <person name="Tartera C."/>
            <person name="White D.G."/>
            <person name="Leclerc J.E."/>
            <person name="Ravel J."/>
            <person name="Cebula T.A."/>
        </authorList>
    </citation>
    <scope>NUCLEOTIDE SEQUENCE [LARGE SCALE GENOMIC DNA]</scope>
    <source>
        <strain>CVM19633</strain>
    </source>
</reference>
<keyword id="KW-0997">Cell inner membrane</keyword>
<keyword id="KW-1003">Cell membrane</keyword>
<keyword id="KW-0472">Membrane</keyword>
<keyword id="KW-0812">Transmembrane</keyword>
<keyword id="KW-1133">Transmembrane helix</keyword>
<keyword id="KW-0813">Transport</keyword>
<feature type="chain" id="PRO_1000200793" description="Multidrug resistance protein MdtG">
    <location>
        <begin position="1"/>
        <end position="404"/>
    </location>
</feature>
<feature type="transmembrane region" description="Helical" evidence="1">
    <location>
        <begin position="19"/>
        <end position="39"/>
    </location>
</feature>
<feature type="transmembrane region" description="Helical" evidence="1">
    <location>
        <begin position="56"/>
        <end position="76"/>
    </location>
</feature>
<feature type="transmembrane region" description="Helical" evidence="1">
    <location>
        <begin position="90"/>
        <end position="110"/>
    </location>
</feature>
<feature type="transmembrane region" description="Helical" evidence="1">
    <location>
        <begin position="113"/>
        <end position="133"/>
    </location>
</feature>
<feature type="transmembrane region" description="Helical" evidence="1">
    <location>
        <begin position="144"/>
        <end position="164"/>
    </location>
</feature>
<feature type="transmembrane region" description="Helical" evidence="1">
    <location>
        <begin position="171"/>
        <end position="191"/>
    </location>
</feature>
<feature type="transmembrane region" description="Helical" evidence="1">
    <location>
        <begin position="222"/>
        <end position="242"/>
    </location>
</feature>
<feature type="transmembrane region" description="Helical" evidence="1">
    <location>
        <begin position="254"/>
        <end position="274"/>
    </location>
</feature>
<feature type="transmembrane region" description="Helical" evidence="1">
    <location>
        <begin position="288"/>
        <end position="308"/>
    </location>
</feature>
<feature type="transmembrane region" description="Helical" evidence="1">
    <location>
        <begin position="317"/>
        <end position="337"/>
    </location>
</feature>
<feature type="transmembrane region" description="Helical" evidence="1">
    <location>
        <begin position="376"/>
        <end position="396"/>
    </location>
</feature>
<gene>
    <name evidence="1" type="primary">mdtG</name>
    <name type="ordered locus">SeSA_A1221</name>
</gene>
<organism>
    <name type="scientific">Salmonella schwarzengrund (strain CVM19633)</name>
    <dbReference type="NCBI Taxonomy" id="439843"/>
    <lineage>
        <taxon>Bacteria</taxon>
        <taxon>Pseudomonadati</taxon>
        <taxon>Pseudomonadota</taxon>
        <taxon>Gammaproteobacteria</taxon>
        <taxon>Enterobacterales</taxon>
        <taxon>Enterobacteriaceae</taxon>
        <taxon>Salmonella</taxon>
    </lineage>
</organism>